<reference key="1">
    <citation type="journal article" date="2001" name="Nature">
        <title>Complete genome sequence of a multiple drug resistant Salmonella enterica serovar Typhi CT18.</title>
        <authorList>
            <person name="Parkhill J."/>
            <person name="Dougan G."/>
            <person name="James K.D."/>
            <person name="Thomson N.R."/>
            <person name="Pickard D."/>
            <person name="Wain J."/>
            <person name="Churcher C.M."/>
            <person name="Mungall K.L."/>
            <person name="Bentley S.D."/>
            <person name="Holden M.T.G."/>
            <person name="Sebaihia M."/>
            <person name="Baker S."/>
            <person name="Basham D."/>
            <person name="Brooks K."/>
            <person name="Chillingworth T."/>
            <person name="Connerton P."/>
            <person name="Cronin A."/>
            <person name="Davis P."/>
            <person name="Davies R.M."/>
            <person name="Dowd L."/>
            <person name="White N."/>
            <person name="Farrar J."/>
            <person name="Feltwell T."/>
            <person name="Hamlin N."/>
            <person name="Haque A."/>
            <person name="Hien T.T."/>
            <person name="Holroyd S."/>
            <person name="Jagels K."/>
            <person name="Krogh A."/>
            <person name="Larsen T.S."/>
            <person name="Leather S."/>
            <person name="Moule S."/>
            <person name="O'Gaora P."/>
            <person name="Parry C."/>
            <person name="Quail M.A."/>
            <person name="Rutherford K.M."/>
            <person name="Simmonds M."/>
            <person name="Skelton J."/>
            <person name="Stevens K."/>
            <person name="Whitehead S."/>
            <person name="Barrell B.G."/>
        </authorList>
    </citation>
    <scope>NUCLEOTIDE SEQUENCE [LARGE SCALE GENOMIC DNA]</scope>
    <source>
        <strain>CT18</strain>
    </source>
</reference>
<reference key="2">
    <citation type="journal article" date="2003" name="J. Bacteriol.">
        <title>Comparative genomics of Salmonella enterica serovar Typhi strains Ty2 and CT18.</title>
        <authorList>
            <person name="Deng W."/>
            <person name="Liou S.-R."/>
            <person name="Plunkett G. III"/>
            <person name="Mayhew G.F."/>
            <person name="Rose D.J."/>
            <person name="Burland V."/>
            <person name="Kodoyianni V."/>
            <person name="Schwartz D.C."/>
            <person name="Blattner F.R."/>
        </authorList>
    </citation>
    <scope>NUCLEOTIDE SEQUENCE [LARGE SCALE GENOMIC DNA]</scope>
    <source>
        <strain>ATCC 700931 / Ty2</strain>
    </source>
</reference>
<name>AZOR_SALTI</name>
<accession>P63463</accession>
<accession>Q8XFP4</accession>
<gene>
    <name evidence="2" type="primary">azoR</name>
    <name type="ordered locus">STY1427</name>
    <name type="ordered locus">t1545</name>
</gene>
<sequence>MSKVLVLKSSILAGYSQSGQLTDYFIEQWREKHVADEITVRDLAANPVPVLDGELVGAMRPGDAPLTPRQQDALALSDELIAELKAHDVIVIAAPMYNFNIPTQLKNYFDLIARAGITFRYTEKGPEGLVTGKRAVVLSSRGGIHKDTPTDLIAPYLKVFLGFIGITDVNFVFAEGIAYGPEVAAKAQADAKAAIDSVVAA</sequence>
<feature type="initiator methionine" description="Removed" evidence="1">
    <location>
        <position position="1"/>
    </location>
</feature>
<feature type="chain" id="PRO_0000166315" description="FMN-dependent NADH:quinone oxidoreductase">
    <location>
        <begin position="2"/>
        <end position="201"/>
    </location>
</feature>
<feature type="binding site" evidence="2">
    <location>
        <position position="10"/>
    </location>
    <ligand>
        <name>FMN</name>
        <dbReference type="ChEBI" id="CHEBI:58210"/>
    </ligand>
</feature>
<feature type="binding site" evidence="2">
    <location>
        <begin position="16"/>
        <end position="18"/>
    </location>
    <ligand>
        <name>FMN</name>
        <dbReference type="ChEBI" id="CHEBI:58210"/>
    </ligand>
</feature>
<feature type="binding site" evidence="2">
    <location>
        <begin position="96"/>
        <end position="99"/>
    </location>
    <ligand>
        <name>FMN</name>
        <dbReference type="ChEBI" id="CHEBI:58210"/>
    </ligand>
</feature>
<feature type="binding site" evidence="2">
    <location>
        <begin position="140"/>
        <end position="143"/>
    </location>
    <ligand>
        <name>FMN</name>
        <dbReference type="ChEBI" id="CHEBI:58210"/>
    </ligand>
</feature>
<dbReference type="EC" id="1.6.5.-" evidence="2"/>
<dbReference type="EC" id="1.7.1.17" evidence="2"/>
<dbReference type="EMBL" id="AL513382">
    <property type="protein sequence ID" value="CAD01689.1"/>
    <property type="molecule type" value="Genomic_DNA"/>
</dbReference>
<dbReference type="EMBL" id="AE014613">
    <property type="protein sequence ID" value="AAO69178.1"/>
    <property type="molecule type" value="Genomic_DNA"/>
</dbReference>
<dbReference type="RefSeq" id="NP_455862.1">
    <property type="nucleotide sequence ID" value="NC_003198.1"/>
</dbReference>
<dbReference type="RefSeq" id="WP_000048924.1">
    <property type="nucleotide sequence ID" value="NZ_WSUR01000020.1"/>
</dbReference>
<dbReference type="SMR" id="P63463"/>
<dbReference type="STRING" id="220341.gene:17585379"/>
<dbReference type="KEGG" id="stt:t1545"/>
<dbReference type="KEGG" id="sty:STY1427"/>
<dbReference type="PATRIC" id="fig|220341.7.peg.1437"/>
<dbReference type="eggNOG" id="COG1182">
    <property type="taxonomic scope" value="Bacteria"/>
</dbReference>
<dbReference type="HOGENOM" id="CLU_088964_0_0_6"/>
<dbReference type="OMA" id="FIARPRV"/>
<dbReference type="OrthoDB" id="9787136at2"/>
<dbReference type="Proteomes" id="UP000000541">
    <property type="component" value="Chromosome"/>
</dbReference>
<dbReference type="Proteomes" id="UP000002670">
    <property type="component" value="Chromosome"/>
</dbReference>
<dbReference type="GO" id="GO:0009055">
    <property type="term" value="F:electron transfer activity"/>
    <property type="evidence" value="ECO:0007669"/>
    <property type="project" value="UniProtKB-UniRule"/>
</dbReference>
<dbReference type="GO" id="GO:0010181">
    <property type="term" value="F:FMN binding"/>
    <property type="evidence" value="ECO:0007669"/>
    <property type="project" value="UniProtKB-UniRule"/>
</dbReference>
<dbReference type="GO" id="GO:0016652">
    <property type="term" value="F:oxidoreductase activity, acting on NAD(P)H as acceptor"/>
    <property type="evidence" value="ECO:0007669"/>
    <property type="project" value="UniProtKB-UniRule"/>
</dbReference>
<dbReference type="GO" id="GO:0016655">
    <property type="term" value="F:oxidoreductase activity, acting on NAD(P)H, quinone or similar compound as acceptor"/>
    <property type="evidence" value="ECO:0007669"/>
    <property type="project" value="InterPro"/>
</dbReference>
<dbReference type="FunFam" id="3.40.50.360:FF:000010">
    <property type="entry name" value="FMN-dependent NADH-azoreductase"/>
    <property type="match status" value="1"/>
</dbReference>
<dbReference type="Gene3D" id="3.40.50.360">
    <property type="match status" value="1"/>
</dbReference>
<dbReference type="HAMAP" id="MF_01216">
    <property type="entry name" value="Azoreductase_type1"/>
    <property type="match status" value="1"/>
</dbReference>
<dbReference type="InterPro" id="IPR003680">
    <property type="entry name" value="Flavodoxin_fold"/>
</dbReference>
<dbReference type="InterPro" id="IPR029039">
    <property type="entry name" value="Flavoprotein-like_sf"/>
</dbReference>
<dbReference type="InterPro" id="IPR050104">
    <property type="entry name" value="FMN-dep_NADH:Q_OxRdtase_AzoR1"/>
</dbReference>
<dbReference type="InterPro" id="IPR023048">
    <property type="entry name" value="NADH:quinone_OxRdtase_FMN_depd"/>
</dbReference>
<dbReference type="PANTHER" id="PTHR43741">
    <property type="entry name" value="FMN-DEPENDENT NADH-AZOREDUCTASE 1"/>
    <property type="match status" value="1"/>
</dbReference>
<dbReference type="PANTHER" id="PTHR43741:SF2">
    <property type="entry name" value="FMN-DEPENDENT NADH:QUINONE OXIDOREDUCTASE"/>
    <property type="match status" value="1"/>
</dbReference>
<dbReference type="Pfam" id="PF02525">
    <property type="entry name" value="Flavodoxin_2"/>
    <property type="match status" value="1"/>
</dbReference>
<dbReference type="SUPFAM" id="SSF52218">
    <property type="entry name" value="Flavoproteins"/>
    <property type="match status" value="1"/>
</dbReference>
<evidence type="ECO:0000250" key="1"/>
<evidence type="ECO:0000255" key="2">
    <source>
        <dbReference type="HAMAP-Rule" id="MF_01216"/>
    </source>
</evidence>
<protein>
    <recommendedName>
        <fullName evidence="2">FMN-dependent NADH:quinone oxidoreductase</fullName>
        <ecNumber evidence="2">1.6.5.-</ecNumber>
    </recommendedName>
    <alternativeName>
        <fullName evidence="2">Azo-dye reductase</fullName>
    </alternativeName>
    <alternativeName>
        <fullName evidence="2">FMN-dependent NADH-azo compound oxidoreductase</fullName>
    </alternativeName>
    <alternativeName>
        <fullName evidence="2">FMN-dependent NADH-azoreductase</fullName>
        <ecNumber evidence="2">1.7.1.17</ecNumber>
    </alternativeName>
</protein>
<proteinExistence type="inferred from homology"/>
<keyword id="KW-0285">Flavoprotein</keyword>
<keyword id="KW-0288">FMN</keyword>
<keyword id="KW-0520">NAD</keyword>
<keyword id="KW-0560">Oxidoreductase</keyword>
<organism>
    <name type="scientific">Salmonella typhi</name>
    <dbReference type="NCBI Taxonomy" id="90370"/>
    <lineage>
        <taxon>Bacteria</taxon>
        <taxon>Pseudomonadati</taxon>
        <taxon>Pseudomonadota</taxon>
        <taxon>Gammaproteobacteria</taxon>
        <taxon>Enterobacterales</taxon>
        <taxon>Enterobacteriaceae</taxon>
        <taxon>Salmonella</taxon>
    </lineage>
</organism>
<comment type="function">
    <text evidence="2">Quinone reductase that provides resistance to thiol-specific stress caused by electrophilic quinones.</text>
</comment>
<comment type="function">
    <text evidence="2">Also exhibits azoreductase activity. Catalyzes the reductive cleavage of the azo bond in aromatic azo compounds to the corresponding amines.</text>
</comment>
<comment type="catalytic activity">
    <reaction evidence="2">
        <text>2 a quinone + NADH + H(+) = 2 a 1,4-benzosemiquinone + NAD(+)</text>
        <dbReference type="Rhea" id="RHEA:65952"/>
        <dbReference type="ChEBI" id="CHEBI:15378"/>
        <dbReference type="ChEBI" id="CHEBI:57540"/>
        <dbReference type="ChEBI" id="CHEBI:57945"/>
        <dbReference type="ChEBI" id="CHEBI:132124"/>
        <dbReference type="ChEBI" id="CHEBI:134225"/>
    </reaction>
</comment>
<comment type="catalytic activity">
    <reaction evidence="2">
        <text>N,N-dimethyl-1,4-phenylenediamine + anthranilate + 2 NAD(+) = 2-(4-dimethylaminophenyl)diazenylbenzoate + 2 NADH + 2 H(+)</text>
        <dbReference type="Rhea" id="RHEA:55872"/>
        <dbReference type="ChEBI" id="CHEBI:15378"/>
        <dbReference type="ChEBI" id="CHEBI:15783"/>
        <dbReference type="ChEBI" id="CHEBI:16567"/>
        <dbReference type="ChEBI" id="CHEBI:57540"/>
        <dbReference type="ChEBI" id="CHEBI:57945"/>
        <dbReference type="ChEBI" id="CHEBI:71579"/>
        <dbReference type="EC" id="1.7.1.17"/>
    </reaction>
</comment>
<comment type="cofactor">
    <cofactor evidence="2">
        <name>FMN</name>
        <dbReference type="ChEBI" id="CHEBI:58210"/>
    </cofactor>
    <text evidence="2">Binds 1 FMN per subunit.</text>
</comment>
<comment type="subunit">
    <text evidence="2">Homodimer.</text>
</comment>
<comment type="similarity">
    <text evidence="2">Belongs to the azoreductase type 1 family.</text>
</comment>